<accession>P30038</accession>
<accession>A8K1Q7</accession>
<accession>B4DGE4</accession>
<accession>D2D4A3</accession>
<accession>Q16882</accession>
<accession>Q53HU4</accession>
<accession>Q5JNV6</accession>
<accession>Q8IZ38</accession>
<accession>Q96IF0</accession>
<accession>Q9UDI6</accession>
<name>AL4A1_HUMAN</name>
<organism>
    <name type="scientific">Homo sapiens</name>
    <name type="common">Human</name>
    <dbReference type="NCBI Taxonomy" id="9606"/>
    <lineage>
        <taxon>Eukaryota</taxon>
        <taxon>Metazoa</taxon>
        <taxon>Chordata</taxon>
        <taxon>Craniata</taxon>
        <taxon>Vertebrata</taxon>
        <taxon>Euteleostomi</taxon>
        <taxon>Mammalia</taxon>
        <taxon>Eutheria</taxon>
        <taxon>Euarchontoglires</taxon>
        <taxon>Primates</taxon>
        <taxon>Haplorrhini</taxon>
        <taxon>Catarrhini</taxon>
        <taxon>Hominidae</taxon>
        <taxon>Homo</taxon>
    </lineage>
</organism>
<protein>
    <recommendedName>
        <fullName>Delta-1-pyrroline-5-carboxylate dehydrogenase, mitochondrial</fullName>
        <shortName>P5C dehydrogenase</shortName>
        <ecNumber>1.2.1.88</ecNumber>
    </recommendedName>
    <alternativeName>
        <fullName>Aldehyde dehydrogenase family 4 member A1</fullName>
    </alternativeName>
    <alternativeName>
        <fullName>L-glutamate gamma-semialdehyde dehydrogenase</fullName>
    </alternativeName>
</protein>
<feature type="transit peptide" description="Mitochondrion" evidence="5">
    <location>
        <begin position="1"/>
        <end position="24"/>
    </location>
</feature>
<feature type="chain" id="PRO_0000007173" description="Delta-1-pyrroline-5-carboxylate dehydrogenase, mitochondrial">
    <location>
        <begin position="25"/>
        <end position="563"/>
    </location>
</feature>
<feature type="active site" description="Proton acceptor" evidence="3 4">
    <location>
        <position position="314"/>
    </location>
</feature>
<feature type="active site" description="Nucleophile" evidence="3 4 8">
    <location>
        <position position="348"/>
    </location>
</feature>
<feature type="binding site" evidence="1">
    <location>
        <position position="208"/>
    </location>
    <ligand>
        <name>NAD(+)</name>
        <dbReference type="ChEBI" id="CHEBI:57540"/>
    </ligand>
</feature>
<feature type="binding site" evidence="1">
    <location>
        <position position="233"/>
    </location>
    <ligand>
        <name>NAD(+)</name>
        <dbReference type="ChEBI" id="CHEBI:57540"/>
    </ligand>
</feature>
<feature type="binding site" evidence="1">
    <location>
        <begin position="286"/>
        <end position="290"/>
    </location>
    <ligand>
        <name>NAD(+)</name>
        <dbReference type="ChEBI" id="CHEBI:57540"/>
    </ligand>
</feature>
<feature type="binding site" evidence="1">
    <location>
        <position position="447"/>
    </location>
    <ligand>
        <name>NAD(+)</name>
        <dbReference type="ChEBI" id="CHEBI:57540"/>
    </ligand>
</feature>
<feature type="binding site" evidence="1">
    <location>
        <position position="513"/>
    </location>
    <ligand>
        <name>substrate</name>
    </ligand>
</feature>
<feature type="site" description="Transition state stabilizer" evidence="1">
    <location>
        <position position="211"/>
    </location>
</feature>
<feature type="modified residue" description="N6-succinyllysine" evidence="2">
    <location>
        <position position="31"/>
    </location>
</feature>
<feature type="modified residue" description="Phosphoserine" evidence="13 14">
    <location>
        <position position="44"/>
    </location>
</feature>
<feature type="modified residue" description="N6-acetyllysine" evidence="2">
    <location>
        <position position="52"/>
    </location>
</feature>
<feature type="modified residue" description="N6-acetyllysine; alternate" evidence="2">
    <location>
        <position position="93"/>
    </location>
</feature>
<feature type="modified residue" description="N6-succinyllysine; alternate" evidence="2">
    <location>
        <position position="93"/>
    </location>
</feature>
<feature type="modified residue" description="N6-acetyllysine; alternate" evidence="2">
    <location>
        <position position="99"/>
    </location>
</feature>
<feature type="modified residue" description="N6-succinyllysine; alternate" evidence="2">
    <location>
        <position position="99"/>
    </location>
</feature>
<feature type="modified residue" description="N6-acetyllysine; alternate" evidence="2">
    <location>
        <position position="114"/>
    </location>
</feature>
<feature type="modified residue" description="N6-succinyllysine; alternate" evidence="2">
    <location>
        <position position="114"/>
    </location>
</feature>
<feature type="modified residue" description="N6-acetyllysine; alternate" evidence="2">
    <location>
        <position position="130"/>
    </location>
</feature>
<feature type="modified residue" description="N6-succinyllysine; alternate" evidence="2">
    <location>
        <position position="130"/>
    </location>
</feature>
<feature type="modified residue" description="N6-acetyllysine; alternate" evidence="2">
    <location>
        <position position="175"/>
    </location>
</feature>
<feature type="modified residue" description="N6-succinyllysine; alternate" evidence="2">
    <location>
        <position position="175"/>
    </location>
</feature>
<feature type="modified residue" description="N6-acetyllysine" evidence="2">
    <location>
        <position position="318"/>
    </location>
</feature>
<feature type="modified residue" description="N6-succinyllysine" evidence="2">
    <location>
        <position position="347"/>
    </location>
</feature>
<feature type="modified residue" description="N6-acetyllysine" evidence="2">
    <location>
        <position position="365"/>
    </location>
</feature>
<feature type="modified residue" description="N6-acetyllysine" evidence="2">
    <location>
        <position position="376"/>
    </location>
</feature>
<feature type="modified residue" description="N6-succinyllysine" evidence="2">
    <location>
        <position position="395"/>
    </location>
</feature>
<feature type="modified residue" description="N6-acetyllysine" evidence="2">
    <location>
        <position position="462"/>
    </location>
</feature>
<feature type="modified residue" description="N6-acetyllysine; alternate" evidence="2">
    <location>
        <position position="509"/>
    </location>
</feature>
<feature type="modified residue" description="N6-succinyllysine; alternate" evidence="2">
    <location>
        <position position="509"/>
    </location>
</feature>
<feature type="modified residue" description="N6-acetyllysine" evidence="2">
    <location>
        <position position="531"/>
    </location>
</feature>
<feature type="modified residue" description="N6-acetyllysine" evidence="2">
    <location>
        <position position="552"/>
    </location>
</feature>
<feature type="splice variant" id="VSP_043785" description="In isoform 2." evidence="10">
    <location>
        <begin position="1"/>
        <end position="60"/>
    </location>
</feature>
<feature type="splice variant" id="VSP_047732" description="In isoform 3." evidence="11">
    <location>
        <begin position="396"/>
        <end position="446"/>
    </location>
</feature>
<feature type="sequence variant" id="VAR_002259" description="In allele ALDH4A1*4; dbSNP:rs146450609." evidence="9">
    <original>P</original>
    <variation>L</variation>
    <location>
        <position position="16"/>
    </location>
</feature>
<feature type="sequence variant" id="VAR_002260" description="In HYRPRO2; allele ALDH4A1*3; loss of enzyme activity; dbSNP:rs137852937." evidence="8 9">
    <original>S</original>
    <variation>L</variation>
    <location>
        <position position="352"/>
    </location>
</feature>
<feature type="sequence variant" id="VAR_029337" description="In dbSNP:rs2230709." evidence="6 7">
    <original>V</original>
    <variation>I</variation>
    <location>
        <position position="470"/>
    </location>
</feature>
<feature type="sequence variant" id="VAR_048903" description="In dbSNP:rs6695033.">
    <original>T</original>
    <variation>A</variation>
    <location>
        <position position="473"/>
    </location>
</feature>
<feature type="mutagenesis site" description="Reduced affinity for NAD. No effect on enzyme activity." evidence="8">
    <original>S</original>
    <variation>A</variation>
    <location>
        <position position="352"/>
    </location>
</feature>
<feature type="sequence conflict" description="In Ref. 1; AAC50501/AAC50500." evidence="12" ref="1">
    <original>V</original>
    <variation>M</variation>
    <location>
        <position position="68"/>
    </location>
</feature>
<feature type="sequence conflict" description="In Ref. 10; AA sequence." evidence="12" ref="10">
    <original>PPS</original>
    <variation>LPY</variation>
    <location>
        <begin position="189"/>
        <end position="191"/>
    </location>
</feature>
<feature type="sequence conflict" description="In Ref. 8; AA sequence." evidence="12" ref="8">
    <original>P</original>
    <variation>L</variation>
    <location>
        <position position="189"/>
    </location>
</feature>
<feature type="sequence conflict" description="In Ref. 4; BAD96206." evidence="12" ref="4">
    <original>M</original>
    <variation>I</variation>
    <location>
        <position position="226"/>
    </location>
</feature>
<feature type="sequence conflict" description="In Ref. 8; AA sequence and 10; AA sequence." evidence="12" ref="8 10">
    <original>D</original>
    <variation>E</variation>
    <location>
        <position position="271"/>
    </location>
</feature>
<feature type="sequence conflict" description="In Ref. 10; AA sequence." evidence="12" ref="10">
    <original>L</original>
    <variation>K</variation>
    <location>
        <position position="354"/>
    </location>
</feature>
<feature type="sequence conflict" description="In Ref. 4; BAD96206." evidence="12" ref="4">
    <original>K</original>
    <variation>R</variation>
    <location>
        <position position="376"/>
    </location>
</feature>
<feature type="sequence conflict" description="In Ref. 10; AA sequence." evidence="12" ref="10">
    <original>RAS</original>
    <variation>GSA</variation>
    <location>
        <begin position="524"/>
        <end position="526"/>
    </location>
</feature>
<feature type="strand" evidence="15">
    <location>
        <begin position="24"/>
        <end position="30"/>
    </location>
</feature>
<feature type="helix" evidence="17">
    <location>
        <begin position="45"/>
        <end position="57"/>
    </location>
</feature>
<feature type="strand" evidence="17">
    <location>
        <begin position="62"/>
        <end position="64"/>
    </location>
</feature>
<feature type="strand" evidence="17">
    <location>
        <begin position="66"/>
        <end position="68"/>
    </location>
</feature>
<feature type="strand" evidence="17">
    <location>
        <begin position="71"/>
        <end position="73"/>
    </location>
</feature>
<feature type="strand" evidence="17">
    <location>
        <begin position="78"/>
        <end position="83"/>
    </location>
</feature>
<feature type="strand" evidence="17">
    <location>
        <begin position="86"/>
        <end position="95"/>
    </location>
</feature>
<feature type="helix" evidence="17">
    <location>
        <begin position="99"/>
        <end position="118"/>
    </location>
</feature>
<feature type="helix" evidence="17">
    <location>
        <begin position="121"/>
        <end position="136"/>
    </location>
</feature>
<feature type="turn" evidence="17">
    <location>
        <begin position="137"/>
        <end position="139"/>
    </location>
</feature>
<feature type="helix" evidence="17">
    <location>
        <begin position="140"/>
        <end position="151"/>
    </location>
</feature>
<feature type="helix" evidence="17">
    <location>
        <begin position="155"/>
        <end position="165"/>
    </location>
</feature>
<feature type="helix" evidence="17">
    <location>
        <begin position="167"/>
        <end position="180"/>
    </location>
</feature>
<feature type="strand" evidence="17">
    <location>
        <begin position="192"/>
        <end position="199"/>
    </location>
</feature>
<feature type="strand" evidence="17">
    <location>
        <begin position="201"/>
        <end position="207"/>
    </location>
</feature>
<feature type="helix" evidence="17">
    <location>
        <begin position="217"/>
        <end position="225"/>
    </location>
</feature>
<feature type="strand" evidence="17">
    <location>
        <begin position="229"/>
        <end position="233"/>
    </location>
</feature>
<feature type="helix" evidence="17">
    <location>
        <begin position="236"/>
        <end position="238"/>
    </location>
</feature>
<feature type="helix" evidence="17">
    <location>
        <begin position="239"/>
        <end position="251"/>
    </location>
</feature>
<feature type="strand" evidence="17">
    <location>
        <begin position="258"/>
        <end position="261"/>
    </location>
</feature>
<feature type="helix" evidence="17">
    <location>
        <begin position="266"/>
        <end position="274"/>
    </location>
</feature>
<feature type="strand" evidence="17">
    <location>
        <begin position="279"/>
        <end position="286"/>
    </location>
</feature>
<feature type="helix" evidence="17">
    <location>
        <begin position="288"/>
        <end position="300"/>
    </location>
</feature>
<feature type="helix" evidence="17">
    <location>
        <begin position="301"/>
        <end position="304"/>
    </location>
</feature>
<feature type="strand" evidence="17">
    <location>
        <begin position="310"/>
        <end position="315"/>
    </location>
</feature>
<feature type="strand" evidence="17">
    <location>
        <begin position="319"/>
        <end position="323"/>
    </location>
</feature>
<feature type="helix" evidence="17">
    <location>
        <begin position="329"/>
        <end position="341"/>
    </location>
</feature>
<feature type="helix" evidence="17">
    <location>
        <begin position="342"/>
        <end position="345"/>
    </location>
</feature>
<feature type="strand" evidence="17">
    <location>
        <begin position="351"/>
        <end position="357"/>
    </location>
</feature>
<feature type="turn" evidence="17">
    <location>
        <begin position="358"/>
        <end position="360"/>
    </location>
</feature>
<feature type="helix" evidence="17">
    <location>
        <begin position="361"/>
        <end position="372"/>
    </location>
</feature>
<feature type="turn" evidence="17">
    <location>
        <begin position="380"/>
        <end position="382"/>
    </location>
</feature>
<feature type="helix" evidence="17">
    <location>
        <begin position="394"/>
        <end position="409"/>
    </location>
</feature>
<feature type="strand" evidence="17">
    <location>
        <begin position="413"/>
        <end position="417"/>
    </location>
</feature>
<feature type="strand" evidence="17">
    <location>
        <begin position="424"/>
        <end position="426"/>
    </location>
</feature>
<feature type="strand" evidence="17">
    <location>
        <begin position="432"/>
        <end position="437"/>
    </location>
</feature>
<feature type="helix" evidence="17">
    <location>
        <begin position="442"/>
        <end position="445"/>
    </location>
</feature>
<feature type="strand" evidence="17">
    <location>
        <begin position="450"/>
        <end position="458"/>
    </location>
</feature>
<feature type="helix" evidence="17">
    <location>
        <begin position="460"/>
        <end position="462"/>
    </location>
</feature>
<feature type="helix" evidence="17">
    <location>
        <begin position="463"/>
        <end position="472"/>
    </location>
</feature>
<feature type="strand" evidence="16">
    <location>
        <begin position="475"/>
        <end position="477"/>
    </location>
</feature>
<feature type="strand" evidence="17">
    <location>
        <begin position="479"/>
        <end position="483"/>
    </location>
</feature>
<feature type="helix" evidence="17">
    <location>
        <begin position="487"/>
        <end position="496"/>
    </location>
</feature>
<feature type="turn" evidence="17">
    <location>
        <begin position="497"/>
        <end position="500"/>
    </location>
</feature>
<feature type="strand" evidence="17">
    <location>
        <begin position="502"/>
        <end position="508"/>
    </location>
</feature>
<feature type="turn" evidence="15">
    <location>
        <begin position="515"/>
        <end position="517"/>
    </location>
</feature>
<feature type="helix" evidence="17">
    <location>
        <begin position="528"/>
        <end position="530"/>
    </location>
</feature>
<feature type="strand" evidence="15">
    <location>
        <begin position="534"/>
        <end position="536"/>
    </location>
</feature>
<feature type="helix" evidence="17">
    <location>
        <begin position="537"/>
        <end position="541"/>
    </location>
</feature>
<feature type="strand" evidence="17">
    <location>
        <begin position="542"/>
        <end position="549"/>
    </location>
</feature>
<feature type="helix" evidence="15">
    <location>
        <begin position="560"/>
        <end position="562"/>
    </location>
</feature>
<dbReference type="EC" id="1.2.1.88"/>
<dbReference type="EMBL" id="U24267">
    <property type="protein sequence ID" value="AAC50501.1"/>
    <property type="molecule type" value="mRNA"/>
</dbReference>
<dbReference type="EMBL" id="U24266">
    <property type="protein sequence ID" value="AAC50500.1"/>
    <property type="molecule type" value="mRNA"/>
</dbReference>
<dbReference type="EMBL" id="FJ462711">
    <property type="protein sequence ID" value="ACN89883.1"/>
    <property type="molecule type" value="mRNA"/>
</dbReference>
<dbReference type="EMBL" id="AK289972">
    <property type="protein sequence ID" value="BAF82661.1"/>
    <property type="molecule type" value="mRNA"/>
</dbReference>
<dbReference type="EMBL" id="AK294552">
    <property type="protein sequence ID" value="BAG57755.1"/>
    <property type="molecule type" value="mRNA"/>
</dbReference>
<dbReference type="EMBL" id="AK222486">
    <property type="protein sequence ID" value="BAD96206.1"/>
    <property type="molecule type" value="mRNA"/>
</dbReference>
<dbReference type="EMBL" id="AL080251">
    <property type="status" value="NOT_ANNOTATED_CDS"/>
    <property type="molecule type" value="Genomic_DNA"/>
</dbReference>
<dbReference type="EMBL" id="AL954340">
    <property type="status" value="NOT_ANNOTATED_CDS"/>
    <property type="molecule type" value="Genomic_DNA"/>
</dbReference>
<dbReference type="EMBL" id="BX537160">
    <property type="status" value="NOT_ANNOTATED_CDS"/>
    <property type="molecule type" value="Genomic_DNA"/>
</dbReference>
<dbReference type="EMBL" id="CH471134">
    <property type="protein sequence ID" value="EAW94858.1"/>
    <property type="molecule type" value="Genomic_DNA"/>
</dbReference>
<dbReference type="EMBL" id="BC007581">
    <property type="protein sequence ID" value="AAH07581.1"/>
    <property type="molecule type" value="mRNA"/>
</dbReference>
<dbReference type="EMBL" id="BC023600">
    <property type="protein sequence ID" value="AAH23600.1"/>
    <property type="molecule type" value="mRNA"/>
</dbReference>
<dbReference type="CCDS" id="CCDS188.1">
    <molecule id="P30038-1"/>
</dbReference>
<dbReference type="CCDS" id="CCDS53272.1">
    <molecule id="P30038-2"/>
</dbReference>
<dbReference type="CCDS" id="CCDS81273.1">
    <molecule id="P30038-3"/>
</dbReference>
<dbReference type="RefSeq" id="NP_001154976.1">
    <molecule id="P30038-2"/>
    <property type="nucleotide sequence ID" value="NM_001161504.2"/>
</dbReference>
<dbReference type="RefSeq" id="NP_001306147.1">
    <molecule id="P30038-3"/>
    <property type="nucleotide sequence ID" value="NM_001319218.2"/>
</dbReference>
<dbReference type="RefSeq" id="NP_003739.2">
    <molecule id="P30038-1"/>
    <property type="nucleotide sequence ID" value="NM_003748.3"/>
</dbReference>
<dbReference type="RefSeq" id="NP_733844.1">
    <molecule id="P30038-1"/>
    <property type="nucleotide sequence ID" value="NM_170726.3"/>
</dbReference>
<dbReference type="PDB" id="3V9G">
    <property type="method" value="X-ray"/>
    <property type="resolution" value="2.50 A"/>
    <property type="chains" value="A/B/C/D=18-563"/>
</dbReference>
<dbReference type="PDB" id="3V9H">
    <property type="method" value="X-ray"/>
    <property type="resolution" value="2.40 A"/>
    <property type="chains" value="A/B/C/D=18-563"/>
</dbReference>
<dbReference type="PDB" id="3V9I">
    <property type="method" value="X-ray"/>
    <property type="resolution" value="2.85 A"/>
    <property type="chains" value="A/B/C/D=18-563"/>
</dbReference>
<dbReference type="PDB" id="4OE5">
    <property type="method" value="X-ray"/>
    <property type="resolution" value="1.95 A"/>
    <property type="chains" value="A/B/C/D=18-563"/>
</dbReference>
<dbReference type="PDB" id="8RKQ">
    <property type="method" value="X-ray"/>
    <property type="resolution" value="2.60 A"/>
    <property type="chains" value="A/B/C/D=18-563"/>
</dbReference>
<dbReference type="PDB" id="8RKR">
    <property type="method" value="X-ray"/>
    <property type="resolution" value="1.20 A"/>
    <property type="chains" value="A/B=18-563"/>
</dbReference>
<dbReference type="PDBsum" id="3V9G"/>
<dbReference type="PDBsum" id="3V9H"/>
<dbReference type="PDBsum" id="3V9I"/>
<dbReference type="PDBsum" id="4OE5"/>
<dbReference type="PDBsum" id="8RKQ"/>
<dbReference type="PDBsum" id="8RKR"/>
<dbReference type="SMR" id="P30038"/>
<dbReference type="BioGRID" id="114208">
    <property type="interactions" value="111"/>
</dbReference>
<dbReference type="FunCoup" id="P30038">
    <property type="interactions" value="1706"/>
</dbReference>
<dbReference type="IntAct" id="P30038">
    <property type="interactions" value="25"/>
</dbReference>
<dbReference type="STRING" id="9606.ENSP00000364490"/>
<dbReference type="ChEMBL" id="CHEMBL3414418"/>
<dbReference type="DrugBank" id="DB00157">
    <property type="generic name" value="NADH"/>
</dbReference>
<dbReference type="CarbonylDB" id="P30038"/>
<dbReference type="GlyGen" id="P30038">
    <property type="glycosylation" value="1 site, 1 O-linked glycan (1 site)"/>
</dbReference>
<dbReference type="iPTMnet" id="P30038"/>
<dbReference type="PhosphoSitePlus" id="P30038"/>
<dbReference type="SwissPalm" id="P30038"/>
<dbReference type="BioMuta" id="ALDH4A1"/>
<dbReference type="DMDM" id="62511241"/>
<dbReference type="OGP" id="P30038"/>
<dbReference type="CPTAC" id="CPTAC-165"/>
<dbReference type="CPTAC" id="CPTAC-166"/>
<dbReference type="jPOST" id="P30038"/>
<dbReference type="MassIVE" id="P30038"/>
<dbReference type="PaxDb" id="9606-ENSP00000364490"/>
<dbReference type="PeptideAtlas" id="P30038"/>
<dbReference type="ProteomicsDB" id="12731"/>
<dbReference type="ProteomicsDB" id="54616">
    <molecule id="P30038-1"/>
</dbReference>
<dbReference type="ProteomicsDB" id="54617">
    <molecule id="P30038-2"/>
</dbReference>
<dbReference type="Pumba" id="P30038"/>
<dbReference type="Antibodypedia" id="1590">
    <property type="antibodies" value="317 antibodies from 31 providers"/>
</dbReference>
<dbReference type="DNASU" id="8659"/>
<dbReference type="Ensembl" id="ENST00000290597.9">
    <molecule id="P30038-1"/>
    <property type="protein sequence ID" value="ENSP00000290597.5"/>
    <property type="gene ID" value="ENSG00000159423.17"/>
</dbReference>
<dbReference type="Ensembl" id="ENST00000375341.8">
    <molecule id="P30038-1"/>
    <property type="protein sequence ID" value="ENSP00000364490.3"/>
    <property type="gene ID" value="ENSG00000159423.17"/>
</dbReference>
<dbReference type="Ensembl" id="ENST00000538309.5">
    <molecule id="P30038-2"/>
    <property type="protein sequence ID" value="ENSP00000442988.1"/>
    <property type="gene ID" value="ENSG00000159423.17"/>
</dbReference>
<dbReference type="Ensembl" id="ENST00000538839.5">
    <molecule id="P30038-3"/>
    <property type="protein sequence ID" value="ENSP00000446071.1"/>
    <property type="gene ID" value="ENSG00000159423.17"/>
</dbReference>
<dbReference type="GeneID" id="8659"/>
<dbReference type="KEGG" id="hsa:8659"/>
<dbReference type="MANE-Select" id="ENST00000375341.8">
    <property type="protein sequence ID" value="ENSP00000364490.3"/>
    <property type="RefSeq nucleotide sequence ID" value="NM_003748.4"/>
    <property type="RefSeq protein sequence ID" value="NP_003739.2"/>
</dbReference>
<dbReference type="UCSC" id="uc001bbb.4">
    <molecule id="P30038-1"/>
    <property type="organism name" value="human"/>
</dbReference>
<dbReference type="AGR" id="HGNC:406"/>
<dbReference type="CTD" id="8659"/>
<dbReference type="DisGeNET" id="8659"/>
<dbReference type="GeneCards" id="ALDH4A1"/>
<dbReference type="HGNC" id="HGNC:406">
    <property type="gene designation" value="ALDH4A1"/>
</dbReference>
<dbReference type="HPA" id="ENSG00000159423">
    <property type="expression patterns" value="Tissue enhanced (kidney, liver)"/>
</dbReference>
<dbReference type="MalaCards" id="ALDH4A1"/>
<dbReference type="MIM" id="239510">
    <property type="type" value="phenotype"/>
</dbReference>
<dbReference type="MIM" id="606811">
    <property type="type" value="gene"/>
</dbReference>
<dbReference type="neXtProt" id="NX_P30038"/>
<dbReference type="OpenTargets" id="ENSG00000159423"/>
<dbReference type="Orphanet" id="79101">
    <property type="disease" value="Hyperprolinemia type 2"/>
</dbReference>
<dbReference type="PharmGKB" id="PA24701"/>
<dbReference type="VEuPathDB" id="HostDB:ENSG00000159423"/>
<dbReference type="eggNOG" id="KOG2455">
    <property type="taxonomic scope" value="Eukaryota"/>
</dbReference>
<dbReference type="GeneTree" id="ENSGT00560000077335"/>
<dbReference type="HOGENOM" id="CLU_005391_4_1_1"/>
<dbReference type="InParanoid" id="P30038"/>
<dbReference type="OMA" id="FAGIHFT"/>
<dbReference type="OrthoDB" id="5322683at2759"/>
<dbReference type="PAN-GO" id="P30038">
    <property type="GO annotations" value="1 GO annotation based on evolutionary models"/>
</dbReference>
<dbReference type="PhylomeDB" id="P30038"/>
<dbReference type="TreeFam" id="TF300481"/>
<dbReference type="BioCyc" id="MetaCyc:HS14757-MONOMER"/>
<dbReference type="BRENDA" id="1.2.1.88">
    <property type="organism ID" value="2681"/>
</dbReference>
<dbReference type="PathwayCommons" id="P30038"/>
<dbReference type="Reactome" id="R-HSA-389661">
    <property type="pathway name" value="Glyoxylate metabolism and glycine degradation"/>
</dbReference>
<dbReference type="Reactome" id="R-HSA-70688">
    <property type="pathway name" value="Proline catabolism"/>
</dbReference>
<dbReference type="SABIO-RK" id="P30038"/>
<dbReference type="SignaLink" id="P30038"/>
<dbReference type="UniPathway" id="UPA00261">
    <property type="reaction ID" value="UER00374"/>
</dbReference>
<dbReference type="BioGRID-ORCS" id="8659">
    <property type="hits" value="10 hits in 1159 CRISPR screens"/>
</dbReference>
<dbReference type="CD-CODE" id="FB4E32DD">
    <property type="entry name" value="Presynaptic clusters and postsynaptic densities"/>
</dbReference>
<dbReference type="ChiTaRS" id="ALDH4A1">
    <property type="organism name" value="human"/>
</dbReference>
<dbReference type="EvolutionaryTrace" id="P30038"/>
<dbReference type="GeneWiki" id="Aldehyde_dehydrogenase_4_family,_member_A1"/>
<dbReference type="GenomeRNAi" id="8659"/>
<dbReference type="Pharos" id="P30038">
    <property type="development level" value="Tbio"/>
</dbReference>
<dbReference type="PRO" id="PR:P30038"/>
<dbReference type="Proteomes" id="UP000005640">
    <property type="component" value="Chromosome 1"/>
</dbReference>
<dbReference type="RNAct" id="P30038">
    <property type="molecule type" value="protein"/>
</dbReference>
<dbReference type="Bgee" id="ENSG00000159423">
    <property type="expression patterns" value="Expressed in right lobe of liver and 168 other cell types or tissues"/>
</dbReference>
<dbReference type="ExpressionAtlas" id="P30038">
    <property type="expression patterns" value="baseline and differential"/>
</dbReference>
<dbReference type="GO" id="GO:0005829">
    <property type="term" value="C:cytosol"/>
    <property type="evidence" value="ECO:0000314"/>
    <property type="project" value="HPA"/>
</dbReference>
<dbReference type="GO" id="GO:0005759">
    <property type="term" value="C:mitochondrial matrix"/>
    <property type="evidence" value="ECO:0000304"/>
    <property type="project" value="Reactome"/>
</dbReference>
<dbReference type="GO" id="GO:0005739">
    <property type="term" value="C:mitochondrion"/>
    <property type="evidence" value="ECO:0000314"/>
    <property type="project" value="HPA"/>
</dbReference>
<dbReference type="GO" id="GO:0003842">
    <property type="term" value="F:1-pyrroline-5-carboxylate dehydrogenase activity"/>
    <property type="evidence" value="ECO:0000318"/>
    <property type="project" value="GO_Central"/>
</dbReference>
<dbReference type="GO" id="GO:0004029">
    <property type="term" value="F:aldehyde dehydrogenase (NAD+) activity"/>
    <property type="evidence" value="ECO:0000314"/>
    <property type="project" value="CACAO"/>
</dbReference>
<dbReference type="GO" id="GO:0009055">
    <property type="term" value="F:electron transfer activity"/>
    <property type="evidence" value="ECO:0000304"/>
    <property type="project" value="UniProtKB"/>
</dbReference>
<dbReference type="GO" id="GO:0042802">
    <property type="term" value="F:identical protein binding"/>
    <property type="evidence" value="ECO:0000353"/>
    <property type="project" value="IntAct"/>
</dbReference>
<dbReference type="GO" id="GO:0019470">
    <property type="term" value="P:4-hydroxyproline catabolic process"/>
    <property type="evidence" value="ECO:0000304"/>
    <property type="project" value="BHF-UCL"/>
</dbReference>
<dbReference type="GO" id="GO:0006562">
    <property type="term" value="P:proline catabolic process"/>
    <property type="evidence" value="ECO:0000304"/>
    <property type="project" value="ProtInc"/>
</dbReference>
<dbReference type="GO" id="GO:0010133">
    <property type="term" value="P:proline catabolic process to glutamate"/>
    <property type="evidence" value="ECO:0007669"/>
    <property type="project" value="UniProtKB-UniPathway"/>
</dbReference>
<dbReference type="GO" id="GO:0006560">
    <property type="term" value="P:proline metabolic process"/>
    <property type="evidence" value="ECO:0000304"/>
    <property type="project" value="ProtInc"/>
</dbReference>
<dbReference type="CDD" id="cd07123">
    <property type="entry name" value="ALDH_F4-17_P5CDH"/>
    <property type="match status" value="1"/>
</dbReference>
<dbReference type="FunFam" id="3.40.605.10:FF:000006">
    <property type="entry name" value="1-pyrroline-5-carboxylate dehydrogenase"/>
    <property type="match status" value="1"/>
</dbReference>
<dbReference type="FunFam" id="3.40.309.10:FF:000005">
    <property type="entry name" value="1-pyrroline-5-carboxylate dehydrogenase 1"/>
    <property type="match status" value="1"/>
</dbReference>
<dbReference type="Gene3D" id="3.40.605.10">
    <property type="entry name" value="Aldehyde Dehydrogenase, Chain A, domain 1"/>
    <property type="match status" value="1"/>
</dbReference>
<dbReference type="Gene3D" id="3.40.309.10">
    <property type="entry name" value="Aldehyde Dehydrogenase, Chain A, domain 2"/>
    <property type="match status" value="1"/>
</dbReference>
<dbReference type="InterPro" id="IPR016161">
    <property type="entry name" value="Ald_DH/histidinol_DH"/>
</dbReference>
<dbReference type="InterPro" id="IPR016163">
    <property type="entry name" value="Ald_DH_C"/>
</dbReference>
<dbReference type="InterPro" id="IPR016160">
    <property type="entry name" value="Ald_DH_CS_CYS"/>
</dbReference>
<dbReference type="InterPro" id="IPR029510">
    <property type="entry name" value="Ald_DH_CS_GLU"/>
</dbReference>
<dbReference type="InterPro" id="IPR016162">
    <property type="entry name" value="Ald_DH_N"/>
</dbReference>
<dbReference type="InterPro" id="IPR015590">
    <property type="entry name" value="Aldehyde_DH_dom"/>
</dbReference>
<dbReference type="InterPro" id="IPR005931">
    <property type="entry name" value="P5CDH/ALDH4A1"/>
</dbReference>
<dbReference type="NCBIfam" id="TIGR01236">
    <property type="entry name" value="D1pyr5carbox1"/>
    <property type="match status" value="1"/>
</dbReference>
<dbReference type="PANTHER" id="PTHR14516">
    <property type="entry name" value="1-PYRROLINE-5-CARBOXYLATE DEHYDROGENASE FAMILY MEMBER"/>
    <property type="match status" value="1"/>
</dbReference>
<dbReference type="PANTHER" id="PTHR14516:SF3">
    <property type="entry name" value="DELTA-1-PYRROLINE-5-CARBOXYLATE DEHYDROGENASE, MITOCHONDRIAL"/>
    <property type="match status" value="1"/>
</dbReference>
<dbReference type="Pfam" id="PF00171">
    <property type="entry name" value="Aldedh"/>
    <property type="match status" value="1"/>
</dbReference>
<dbReference type="SUPFAM" id="SSF53720">
    <property type="entry name" value="ALDH-like"/>
    <property type="match status" value="1"/>
</dbReference>
<dbReference type="PROSITE" id="PS00070">
    <property type="entry name" value="ALDEHYDE_DEHYDR_CYS"/>
    <property type="match status" value="1"/>
</dbReference>
<dbReference type="PROSITE" id="PS00687">
    <property type="entry name" value="ALDEHYDE_DEHYDR_GLU"/>
    <property type="match status" value="1"/>
</dbReference>
<evidence type="ECO:0000250" key="1"/>
<evidence type="ECO:0000250" key="2">
    <source>
        <dbReference type="UniProtKB" id="Q8CHT0"/>
    </source>
</evidence>
<evidence type="ECO:0000255" key="3">
    <source>
        <dbReference type="PROSITE-ProRule" id="PRU10007"/>
    </source>
</evidence>
<evidence type="ECO:0000255" key="4">
    <source>
        <dbReference type="PROSITE-ProRule" id="PRU10008"/>
    </source>
</evidence>
<evidence type="ECO:0000269" key="5">
    <source>
    </source>
</evidence>
<evidence type="ECO:0000269" key="6">
    <source>
    </source>
</evidence>
<evidence type="ECO:0000269" key="7">
    <source>
    </source>
</evidence>
<evidence type="ECO:0000269" key="8">
    <source>
    </source>
</evidence>
<evidence type="ECO:0000269" key="9">
    <source>
    </source>
</evidence>
<evidence type="ECO:0000303" key="10">
    <source>
    </source>
</evidence>
<evidence type="ECO:0000303" key="11">
    <source ref="2"/>
</evidence>
<evidence type="ECO:0000305" key="12"/>
<evidence type="ECO:0007744" key="13">
    <source>
    </source>
</evidence>
<evidence type="ECO:0007744" key="14">
    <source>
    </source>
</evidence>
<evidence type="ECO:0007829" key="15">
    <source>
        <dbReference type="PDB" id="3V9H"/>
    </source>
</evidence>
<evidence type="ECO:0007829" key="16">
    <source>
        <dbReference type="PDB" id="3V9I"/>
    </source>
</evidence>
<evidence type="ECO:0007829" key="17">
    <source>
        <dbReference type="PDB" id="4OE5"/>
    </source>
</evidence>
<comment type="function">
    <text evidence="8">Irreversible conversion of delta-1-pyrroline-5-carboxylate (P5C), derived either from proline or ornithine, to glutamate. This is a necessary step in the pathway interconnecting the urea and tricarboxylic acid cycles. The preferred substrate is glutamic gamma-semialdehyde, other substrates include succinic, glutaric and adipic semialdehydes.</text>
</comment>
<comment type="catalytic activity">
    <reaction evidence="8">
        <text>L-glutamate 5-semialdehyde + NAD(+) + H2O = L-glutamate + NADH + 2 H(+)</text>
        <dbReference type="Rhea" id="RHEA:30235"/>
        <dbReference type="ChEBI" id="CHEBI:15377"/>
        <dbReference type="ChEBI" id="CHEBI:15378"/>
        <dbReference type="ChEBI" id="CHEBI:29985"/>
        <dbReference type="ChEBI" id="CHEBI:57540"/>
        <dbReference type="ChEBI" id="CHEBI:57945"/>
        <dbReference type="ChEBI" id="CHEBI:58066"/>
        <dbReference type="EC" id="1.2.1.88"/>
    </reaction>
</comment>
<comment type="biophysicochemical properties">
    <kinetics>
        <KM evidence="8">100 uM for NAD</KM>
        <KM evidence="8">32 uM for L-pyrroline-5-carboxylate</KM>
    </kinetics>
</comment>
<comment type="pathway">
    <text evidence="8">Amino-acid degradation; L-proline degradation into L-glutamate; L-glutamate from L-proline: step 2/2.</text>
</comment>
<comment type="subunit">
    <text evidence="8">Homodimer.</text>
</comment>
<comment type="interaction">
    <interactant intactId="EBI-3926971">
        <id>P30038</id>
    </interactant>
    <interactant intactId="EBI-3926971">
        <id>P30038</id>
        <label>ALDH4A1</label>
    </interactant>
    <organismsDiffer>false</organismsDiffer>
    <experiments>2</experiments>
</comment>
<comment type="interaction">
    <interactant intactId="EBI-3926971">
        <id>P30038</id>
    </interactant>
    <interactant intactId="EBI-620823">
        <id>Q09028</id>
        <label>RBBP4</label>
    </interactant>
    <organismsDiffer>false</organismsDiffer>
    <experiments>3</experiments>
</comment>
<comment type="subcellular location">
    <subcellularLocation>
        <location>Mitochondrion matrix</location>
    </subcellularLocation>
</comment>
<comment type="alternative products">
    <event type="alternative splicing"/>
    <isoform>
        <id>P30038-1</id>
        <name>1</name>
        <sequence type="displayed"/>
    </isoform>
    <isoform>
        <id>P30038-2</id>
        <name>2</name>
        <sequence type="described" ref="VSP_043785"/>
    </isoform>
    <isoform>
        <id>P30038-3</id>
        <name>3</name>
        <sequence type="described" ref="VSP_047732"/>
    </isoform>
</comment>
<comment type="tissue specificity">
    <text>Highest expression is found in liver followed by skeletal muscle, kidney, heart, brain, placenta, lung and pancreas.</text>
</comment>
<comment type="disease" evidence="8 9">
    <disease id="DI-01783">
        <name>Hyperprolinemia 2</name>
        <acronym>HYRPRO2</acronym>
        <description>An inborn error of proline metabolism resulting in elevated plasma levels of proline and delta-1-pyrroline-5-carboxylate (P5C). The condition is considered to be benign, but affected individuals can exhibit neurological manifestations that vary in severity. Clinical signs include seizures, intellectual deficit and mild developmental delay.</description>
        <dbReference type="MIM" id="239510"/>
    </disease>
    <text>The disease is caused by variants affecting the gene represented in this entry.</text>
</comment>
<comment type="similarity">
    <text evidence="12">Belongs to the aldehyde dehydrogenase family.</text>
</comment>
<proteinExistence type="evidence at protein level"/>
<reference key="1">
    <citation type="journal article" date="1996" name="J. Biol. Chem.">
        <title>Cloning, characterization, and expression of cDNAs encoding human delta 1-pyrroline-5-carboxylate dehydrogenase.</title>
        <authorList>
            <person name="Hu C.-A."/>
            <person name="Lin W.-W."/>
            <person name="Valle D."/>
        </authorList>
    </citation>
    <scope>NUCLEOTIDE SEQUENCE [MRNA] (ISOFORM 1)</scope>
    <source>
        <tissue>Kidney</tissue>
        <tissue>Retina</tissue>
    </source>
</reference>
<reference key="2">
    <citation type="submission" date="2008-11" db="EMBL/GenBank/DDBJ databases">
        <title>A novel transcript variant of human ALDH4A1 gene.</title>
        <authorList>
            <person name="Stagos D."/>
            <person name="Vasiliou V."/>
        </authorList>
    </citation>
    <scope>NUCLEOTIDE SEQUENCE [MRNA] (ISOFORM 3)</scope>
</reference>
<reference key="3">
    <citation type="journal article" date="2004" name="Nat. Genet.">
        <title>Complete sequencing and characterization of 21,243 full-length human cDNAs.</title>
        <authorList>
            <person name="Ota T."/>
            <person name="Suzuki Y."/>
            <person name="Nishikawa T."/>
            <person name="Otsuki T."/>
            <person name="Sugiyama T."/>
            <person name="Irie R."/>
            <person name="Wakamatsu A."/>
            <person name="Hayashi K."/>
            <person name="Sato H."/>
            <person name="Nagai K."/>
            <person name="Kimura K."/>
            <person name="Makita H."/>
            <person name="Sekine M."/>
            <person name="Obayashi M."/>
            <person name="Nishi T."/>
            <person name="Shibahara T."/>
            <person name="Tanaka T."/>
            <person name="Ishii S."/>
            <person name="Yamamoto J."/>
            <person name="Saito K."/>
            <person name="Kawai Y."/>
            <person name="Isono Y."/>
            <person name="Nakamura Y."/>
            <person name="Nagahari K."/>
            <person name="Murakami K."/>
            <person name="Yasuda T."/>
            <person name="Iwayanagi T."/>
            <person name="Wagatsuma M."/>
            <person name="Shiratori A."/>
            <person name="Sudo H."/>
            <person name="Hosoiri T."/>
            <person name="Kaku Y."/>
            <person name="Kodaira H."/>
            <person name="Kondo H."/>
            <person name="Sugawara M."/>
            <person name="Takahashi M."/>
            <person name="Kanda K."/>
            <person name="Yokoi T."/>
            <person name="Furuya T."/>
            <person name="Kikkawa E."/>
            <person name="Omura Y."/>
            <person name="Abe K."/>
            <person name="Kamihara K."/>
            <person name="Katsuta N."/>
            <person name="Sato K."/>
            <person name="Tanikawa M."/>
            <person name="Yamazaki M."/>
            <person name="Ninomiya K."/>
            <person name="Ishibashi T."/>
            <person name="Yamashita H."/>
            <person name="Murakawa K."/>
            <person name="Fujimori K."/>
            <person name="Tanai H."/>
            <person name="Kimata M."/>
            <person name="Watanabe M."/>
            <person name="Hiraoka S."/>
            <person name="Chiba Y."/>
            <person name="Ishida S."/>
            <person name="Ono Y."/>
            <person name="Takiguchi S."/>
            <person name="Watanabe S."/>
            <person name="Yosida M."/>
            <person name="Hotuta T."/>
            <person name="Kusano J."/>
            <person name="Kanehori K."/>
            <person name="Takahashi-Fujii A."/>
            <person name="Hara H."/>
            <person name="Tanase T.-O."/>
            <person name="Nomura Y."/>
            <person name="Togiya S."/>
            <person name="Komai F."/>
            <person name="Hara R."/>
            <person name="Takeuchi K."/>
            <person name="Arita M."/>
            <person name="Imose N."/>
            <person name="Musashino K."/>
            <person name="Yuuki H."/>
            <person name="Oshima A."/>
            <person name="Sasaki N."/>
            <person name="Aotsuka S."/>
            <person name="Yoshikawa Y."/>
            <person name="Matsunawa H."/>
            <person name="Ichihara T."/>
            <person name="Shiohata N."/>
            <person name="Sano S."/>
            <person name="Moriya S."/>
            <person name="Momiyama H."/>
            <person name="Satoh N."/>
            <person name="Takami S."/>
            <person name="Terashima Y."/>
            <person name="Suzuki O."/>
            <person name="Nakagawa S."/>
            <person name="Senoh A."/>
            <person name="Mizoguchi H."/>
            <person name="Goto Y."/>
            <person name="Shimizu F."/>
            <person name="Wakebe H."/>
            <person name="Hishigaki H."/>
            <person name="Watanabe T."/>
            <person name="Sugiyama A."/>
            <person name="Takemoto M."/>
            <person name="Kawakami B."/>
            <person name="Yamazaki M."/>
            <person name="Watanabe K."/>
            <person name="Kumagai A."/>
            <person name="Itakura S."/>
            <person name="Fukuzumi Y."/>
            <person name="Fujimori Y."/>
            <person name="Komiyama M."/>
            <person name="Tashiro H."/>
            <person name="Tanigami A."/>
            <person name="Fujiwara T."/>
            <person name="Ono T."/>
            <person name="Yamada K."/>
            <person name="Fujii Y."/>
            <person name="Ozaki K."/>
            <person name="Hirao M."/>
            <person name="Ohmori Y."/>
            <person name="Kawabata A."/>
            <person name="Hikiji T."/>
            <person name="Kobatake N."/>
            <person name="Inagaki H."/>
            <person name="Ikema Y."/>
            <person name="Okamoto S."/>
            <person name="Okitani R."/>
            <person name="Kawakami T."/>
            <person name="Noguchi S."/>
            <person name="Itoh T."/>
            <person name="Shigeta K."/>
            <person name="Senba T."/>
            <person name="Matsumura K."/>
            <person name="Nakajima Y."/>
            <person name="Mizuno T."/>
            <person name="Morinaga M."/>
            <person name="Sasaki M."/>
            <person name="Togashi T."/>
            <person name="Oyama M."/>
            <person name="Hata H."/>
            <person name="Watanabe M."/>
            <person name="Komatsu T."/>
            <person name="Mizushima-Sugano J."/>
            <person name="Satoh T."/>
            <person name="Shirai Y."/>
            <person name="Takahashi Y."/>
            <person name="Nakagawa K."/>
            <person name="Okumura K."/>
            <person name="Nagase T."/>
            <person name="Nomura N."/>
            <person name="Kikuchi H."/>
            <person name="Masuho Y."/>
            <person name="Yamashita R."/>
            <person name="Nakai K."/>
            <person name="Yada T."/>
            <person name="Nakamura Y."/>
            <person name="Ohara O."/>
            <person name="Isogai T."/>
            <person name="Sugano S."/>
        </authorList>
    </citation>
    <scope>NUCLEOTIDE SEQUENCE [LARGE SCALE MRNA] (ISOFORMS 1 AND 2)</scope>
    <scope>VARIANT ILE-470</scope>
    <source>
        <tissue>Amygdala</tissue>
        <tissue>Hippocampus</tissue>
    </source>
</reference>
<reference key="4">
    <citation type="submission" date="2005-04" db="EMBL/GenBank/DDBJ databases">
        <authorList>
            <person name="Suzuki Y."/>
            <person name="Sugano S."/>
            <person name="Totoki Y."/>
            <person name="Toyoda A."/>
            <person name="Takeda T."/>
            <person name="Sakaki Y."/>
            <person name="Tanaka A."/>
            <person name="Yokoyama S."/>
        </authorList>
    </citation>
    <scope>NUCLEOTIDE SEQUENCE [LARGE SCALE MRNA] (ISOFORM 1)</scope>
    <source>
        <tissue>Adipose tissue</tissue>
    </source>
</reference>
<reference key="5">
    <citation type="journal article" date="2006" name="Nature">
        <title>The DNA sequence and biological annotation of human chromosome 1.</title>
        <authorList>
            <person name="Gregory S.G."/>
            <person name="Barlow K.F."/>
            <person name="McLay K.E."/>
            <person name="Kaul R."/>
            <person name="Swarbreck D."/>
            <person name="Dunham A."/>
            <person name="Scott C.E."/>
            <person name="Howe K.L."/>
            <person name="Woodfine K."/>
            <person name="Spencer C.C.A."/>
            <person name="Jones M.C."/>
            <person name="Gillson C."/>
            <person name="Searle S."/>
            <person name="Zhou Y."/>
            <person name="Kokocinski F."/>
            <person name="McDonald L."/>
            <person name="Evans R."/>
            <person name="Phillips K."/>
            <person name="Atkinson A."/>
            <person name="Cooper R."/>
            <person name="Jones C."/>
            <person name="Hall R.E."/>
            <person name="Andrews T.D."/>
            <person name="Lloyd C."/>
            <person name="Ainscough R."/>
            <person name="Almeida J.P."/>
            <person name="Ambrose K.D."/>
            <person name="Anderson F."/>
            <person name="Andrew R.W."/>
            <person name="Ashwell R.I.S."/>
            <person name="Aubin K."/>
            <person name="Babbage A.K."/>
            <person name="Bagguley C.L."/>
            <person name="Bailey J."/>
            <person name="Beasley H."/>
            <person name="Bethel G."/>
            <person name="Bird C.P."/>
            <person name="Bray-Allen S."/>
            <person name="Brown J.Y."/>
            <person name="Brown A.J."/>
            <person name="Buckley D."/>
            <person name="Burton J."/>
            <person name="Bye J."/>
            <person name="Carder C."/>
            <person name="Chapman J.C."/>
            <person name="Clark S.Y."/>
            <person name="Clarke G."/>
            <person name="Clee C."/>
            <person name="Cobley V."/>
            <person name="Collier R.E."/>
            <person name="Corby N."/>
            <person name="Coville G.J."/>
            <person name="Davies J."/>
            <person name="Deadman R."/>
            <person name="Dunn M."/>
            <person name="Earthrowl M."/>
            <person name="Ellington A.G."/>
            <person name="Errington H."/>
            <person name="Frankish A."/>
            <person name="Frankland J."/>
            <person name="French L."/>
            <person name="Garner P."/>
            <person name="Garnett J."/>
            <person name="Gay L."/>
            <person name="Ghori M.R.J."/>
            <person name="Gibson R."/>
            <person name="Gilby L.M."/>
            <person name="Gillett W."/>
            <person name="Glithero R.J."/>
            <person name="Grafham D.V."/>
            <person name="Griffiths C."/>
            <person name="Griffiths-Jones S."/>
            <person name="Grocock R."/>
            <person name="Hammond S."/>
            <person name="Harrison E.S.I."/>
            <person name="Hart E."/>
            <person name="Haugen E."/>
            <person name="Heath P.D."/>
            <person name="Holmes S."/>
            <person name="Holt K."/>
            <person name="Howden P.J."/>
            <person name="Hunt A.R."/>
            <person name="Hunt S.E."/>
            <person name="Hunter G."/>
            <person name="Isherwood J."/>
            <person name="James R."/>
            <person name="Johnson C."/>
            <person name="Johnson D."/>
            <person name="Joy A."/>
            <person name="Kay M."/>
            <person name="Kershaw J.K."/>
            <person name="Kibukawa M."/>
            <person name="Kimberley A.M."/>
            <person name="King A."/>
            <person name="Knights A.J."/>
            <person name="Lad H."/>
            <person name="Laird G."/>
            <person name="Lawlor S."/>
            <person name="Leongamornlert D.A."/>
            <person name="Lloyd D.M."/>
            <person name="Loveland J."/>
            <person name="Lovell J."/>
            <person name="Lush M.J."/>
            <person name="Lyne R."/>
            <person name="Martin S."/>
            <person name="Mashreghi-Mohammadi M."/>
            <person name="Matthews L."/>
            <person name="Matthews N.S.W."/>
            <person name="McLaren S."/>
            <person name="Milne S."/>
            <person name="Mistry S."/>
            <person name="Moore M.J.F."/>
            <person name="Nickerson T."/>
            <person name="O'Dell C.N."/>
            <person name="Oliver K."/>
            <person name="Palmeiri A."/>
            <person name="Palmer S.A."/>
            <person name="Parker A."/>
            <person name="Patel D."/>
            <person name="Pearce A.V."/>
            <person name="Peck A.I."/>
            <person name="Pelan S."/>
            <person name="Phelps K."/>
            <person name="Phillimore B.J."/>
            <person name="Plumb R."/>
            <person name="Rajan J."/>
            <person name="Raymond C."/>
            <person name="Rouse G."/>
            <person name="Saenphimmachak C."/>
            <person name="Sehra H.K."/>
            <person name="Sheridan E."/>
            <person name="Shownkeen R."/>
            <person name="Sims S."/>
            <person name="Skuce C.D."/>
            <person name="Smith M."/>
            <person name="Steward C."/>
            <person name="Subramanian S."/>
            <person name="Sycamore N."/>
            <person name="Tracey A."/>
            <person name="Tromans A."/>
            <person name="Van Helmond Z."/>
            <person name="Wall M."/>
            <person name="Wallis J.M."/>
            <person name="White S."/>
            <person name="Whitehead S.L."/>
            <person name="Wilkinson J.E."/>
            <person name="Willey D.L."/>
            <person name="Williams H."/>
            <person name="Wilming L."/>
            <person name="Wray P.W."/>
            <person name="Wu Z."/>
            <person name="Coulson A."/>
            <person name="Vaudin M."/>
            <person name="Sulston J.E."/>
            <person name="Durbin R.M."/>
            <person name="Hubbard T."/>
            <person name="Wooster R."/>
            <person name="Dunham I."/>
            <person name="Carter N.P."/>
            <person name="McVean G."/>
            <person name="Ross M.T."/>
            <person name="Harrow J."/>
            <person name="Olson M.V."/>
            <person name="Beck S."/>
            <person name="Rogers J."/>
            <person name="Bentley D.R."/>
        </authorList>
    </citation>
    <scope>NUCLEOTIDE SEQUENCE [LARGE SCALE GENOMIC DNA]</scope>
</reference>
<reference key="6">
    <citation type="submission" date="2005-07" db="EMBL/GenBank/DDBJ databases">
        <authorList>
            <person name="Mural R.J."/>
            <person name="Istrail S."/>
            <person name="Sutton G.G."/>
            <person name="Florea L."/>
            <person name="Halpern A.L."/>
            <person name="Mobarry C.M."/>
            <person name="Lippert R."/>
            <person name="Walenz B."/>
            <person name="Shatkay H."/>
            <person name="Dew I."/>
            <person name="Miller J.R."/>
            <person name="Flanigan M.J."/>
            <person name="Edwards N.J."/>
            <person name="Bolanos R."/>
            <person name="Fasulo D."/>
            <person name="Halldorsson B.V."/>
            <person name="Hannenhalli S."/>
            <person name="Turner R."/>
            <person name="Yooseph S."/>
            <person name="Lu F."/>
            <person name="Nusskern D.R."/>
            <person name="Shue B.C."/>
            <person name="Zheng X.H."/>
            <person name="Zhong F."/>
            <person name="Delcher A.L."/>
            <person name="Huson D.H."/>
            <person name="Kravitz S.A."/>
            <person name="Mouchard L."/>
            <person name="Reinert K."/>
            <person name="Remington K.A."/>
            <person name="Clark A.G."/>
            <person name="Waterman M.S."/>
            <person name="Eichler E.E."/>
            <person name="Adams M.D."/>
            <person name="Hunkapiller M.W."/>
            <person name="Myers E.W."/>
            <person name="Venter J.C."/>
        </authorList>
    </citation>
    <scope>NUCLEOTIDE SEQUENCE [LARGE SCALE GENOMIC DNA]</scope>
</reference>
<reference key="7">
    <citation type="journal article" date="2004" name="Genome Res.">
        <title>The status, quality, and expansion of the NIH full-length cDNA project: the Mammalian Gene Collection (MGC).</title>
        <authorList>
            <consortium name="The MGC Project Team"/>
        </authorList>
    </citation>
    <scope>NUCLEOTIDE SEQUENCE [LARGE SCALE MRNA]</scope>
    <scope>VARIANT ILE-470</scope>
    <source>
        <tissue>Lung</tissue>
        <tissue>Placenta</tissue>
    </source>
</reference>
<reference key="8">
    <citation type="journal article" date="1992" name="Comp. Biochem. Physiol.">
        <title>Human liver glutamic gamma-semialdehyde dehydrogenase: structural relationship to the yeast enzyme.</title>
        <authorList>
            <person name="Hempel J."/>
            <person name="Eckey R."/>
            <person name="Berie D."/>
            <person name="Romovacek H."/>
            <person name="Agarwal D.P."/>
            <person name="Goedde H.W."/>
        </authorList>
    </citation>
    <scope>PARTIAL PROTEIN SEQUENCE</scope>
    <source>
        <tissue>Liver</tissue>
    </source>
</reference>
<reference key="9">
    <citation type="journal article" date="1992" name="Electrophoresis">
        <title>Human liver protein map: a reference database established by microsequencing and gel comparison.</title>
        <authorList>
            <person name="Hochstrasser D.F."/>
            <person name="Frutiger S."/>
            <person name="Paquet N."/>
            <person name="Bairoch A."/>
            <person name="Ravier F."/>
            <person name="Pasquali C."/>
            <person name="Sanchez J.-C."/>
            <person name="Tissot J.-D."/>
            <person name="Bjellqvist B."/>
            <person name="Vargas R."/>
            <person name="Appel R.D."/>
            <person name="Hughes G.J."/>
        </authorList>
    </citation>
    <scope>PROTEIN SEQUENCE OF 25-35</scope>
    <source>
        <tissue>Liver</tissue>
    </source>
</reference>
<reference key="10">
    <citation type="journal article" date="1993" name="Adv. Exp. Med. Biol.">
        <title>Human liver high Km aldehyde dehydrogenase (ALDH4): properties and structural relationship to the glutamic gamma-semialdehyde dehydrogenase.</title>
        <authorList>
            <person name="Agarwal D.P."/>
            <person name="Eckey R."/>
            <person name="Hempel J."/>
            <person name="Goedde H.W."/>
        </authorList>
    </citation>
    <scope>PROTEIN SEQUENCE OF 94-99; 105-113; 125-139; 176-191; 251-273; 339-347; 354-365 AND 510-526</scope>
    <source>
        <tissue>Liver</tissue>
    </source>
</reference>
<reference key="11">
    <citation type="journal article" date="2011" name="BMC Syst. Biol.">
        <title>Initial characterization of the human central proteome.</title>
        <authorList>
            <person name="Burkard T.R."/>
            <person name="Planyavsky M."/>
            <person name="Kaupe I."/>
            <person name="Breitwieser F.P."/>
            <person name="Buerckstuemmer T."/>
            <person name="Bennett K.L."/>
            <person name="Superti-Furga G."/>
            <person name="Colinge J."/>
        </authorList>
    </citation>
    <scope>IDENTIFICATION BY MASS SPECTROMETRY [LARGE SCALE ANALYSIS]</scope>
</reference>
<reference key="12">
    <citation type="journal article" date="2013" name="J. Proteome Res.">
        <title>Toward a comprehensive characterization of a human cancer cell phosphoproteome.</title>
        <authorList>
            <person name="Zhou H."/>
            <person name="Di Palma S."/>
            <person name="Preisinger C."/>
            <person name="Peng M."/>
            <person name="Polat A.N."/>
            <person name="Heck A.J."/>
            <person name="Mohammed S."/>
        </authorList>
    </citation>
    <scope>PHOSPHORYLATION [LARGE SCALE ANALYSIS] AT SER-44</scope>
    <scope>IDENTIFICATION BY MASS SPECTROMETRY [LARGE SCALE ANALYSIS]</scope>
    <source>
        <tissue>Erythroleukemia</tissue>
    </source>
</reference>
<reference key="13">
    <citation type="journal article" date="2014" name="J. Proteomics">
        <title>An enzyme assisted RP-RPLC approach for in-depth analysis of human liver phosphoproteome.</title>
        <authorList>
            <person name="Bian Y."/>
            <person name="Song C."/>
            <person name="Cheng K."/>
            <person name="Dong M."/>
            <person name="Wang F."/>
            <person name="Huang J."/>
            <person name="Sun D."/>
            <person name="Wang L."/>
            <person name="Ye M."/>
            <person name="Zou H."/>
        </authorList>
    </citation>
    <scope>PHOSPHORYLATION [LARGE SCALE ANALYSIS] AT SER-44</scope>
    <scope>IDENTIFICATION BY MASS SPECTROMETRY [LARGE SCALE ANALYSIS]</scope>
    <source>
        <tissue>Liver</tissue>
    </source>
</reference>
<reference key="14">
    <citation type="journal article" date="2015" name="Proteomics">
        <title>N-terminome analysis of the human mitochondrial proteome.</title>
        <authorList>
            <person name="Vaca Jacome A.S."/>
            <person name="Rabilloud T."/>
            <person name="Schaeffer-Reiss C."/>
            <person name="Rompais M."/>
            <person name="Ayoub D."/>
            <person name="Lane L."/>
            <person name="Bairoch A."/>
            <person name="Van Dorsselaer A."/>
            <person name="Carapito C."/>
        </authorList>
    </citation>
    <scope>IDENTIFICATION BY MASS SPECTROMETRY [LARGE SCALE ANALYSIS]</scope>
</reference>
<reference key="15">
    <citation type="journal article" date="2012" name="J. Mol. Biol.">
        <title>The three-dimensional structural basis of type II hyperprolinemia.</title>
        <authorList>
            <person name="Srivastava D."/>
            <person name="Singh R.K."/>
            <person name="Moxley M.A."/>
            <person name="Henzl M.T."/>
            <person name="Becker D.F."/>
            <person name="Tanner J.J."/>
        </authorList>
    </citation>
    <scope>X-RAY CRYSTALLOGRAPHY (2.40 ANGSTROMS) OF 18-563 OF WILD-TYPE; MUTANT ALA-352 AND VARIANT HYRPRO2 LEU-352</scope>
    <scope>CATALYTIC ACTIVITY</scope>
    <scope>FUNCTION</scope>
    <scope>PATHWAY</scope>
    <scope>BIOPHYSICOCHEMICAL PROPERTIES</scope>
    <scope>SUBUNIT</scope>
    <scope>ACTIVE SITE</scope>
    <scope>CHARACTERIZATION OF VARIANT HYRPRO2 LEU-352</scope>
    <scope>MUTAGENESIS OF SER-352</scope>
</reference>
<reference key="16">
    <citation type="journal article" date="1998" name="Hum. Mol. Genet.">
        <title>Mutations in the Delta1-pyrroline 5-carboxylate dehydrogenase gene cause type II hyperprolinemia.</title>
        <authorList>
            <person name="Geraghty M.T."/>
            <person name="Vaughn D."/>
            <person name="Nicholson A.J."/>
            <person name="Lin W.-W."/>
            <person name="Jimenez-Sanchez G."/>
            <person name="Obie C."/>
            <person name="Flynn M.P."/>
            <person name="Valle D."/>
            <person name="Hu C.-A.A."/>
        </authorList>
    </citation>
    <scope>VARIANT HYRPRO2 LEU-352</scope>
    <scope>VARIANT LEU-16</scope>
</reference>
<keyword id="KW-0002">3D-structure</keyword>
<keyword id="KW-0007">Acetylation</keyword>
<keyword id="KW-0025">Alternative splicing</keyword>
<keyword id="KW-0903">Direct protein sequencing</keyword>
<keyword id="KW-0225">Disease variant</keyword>
<keyword id="KW-0496">Mitochondrion</keyword>
<keyword id="KW-0520">NAD</keyword>
<keyword id="KW-0560">Oxidoreductase</keyword>
<keyword id="KW-0597">Phosphoprotein</keyword>
<keyword id="KW-0642">Proline metabolism</keyword>
<keyword id="KW-1267">Proteomics identification</keyword>
<keyword id="KW-1185">Reference proteome</keyword>
<keyword id="KW-0809">Transit peptide</keyword>
<gene>
    <name type="primary">ALDH4A1</name>
    <name type="synonym">ALDH4</name>
    <name type="synonym">P5CDH</name>
</gene>
<sequence length="563" mass="61719">MLLPAPALRRALLSRPWTGAGLRWKHTSSLKVANEPVLAFTQGSPERDALQKALKDLKGRMEAIPCVVGDEEVWTSDVQYQVSPFNHGHKVAKFCYADKSLLNKAIEAALAARKEWDLKPIADRAQIFLKAADMLSGPRRAEILAKTMVGQGKTVIQAEIDAAAELIDFFRFNAKYAVELEGQQPISVPPSTNSTVYRGLEGFVAAISPFNFTAIGGNLAGAPALMGNVVLWKPSDTAMLASYAVYRILREAGLPPNIIQFVPADGPLFGDTVTSSEHLCGINFTGSVPTFKHLWKQVAQNLDRFHTFPRLAGECGGKNFHFVHRSADVESVVSGTLRSAFEYGGQKCSACSRLYVPHSLWPQIKGRLLEEHSRIKVGDPAEDFGTFFSAVIDAKSFARIKKWLEHARSSPSLTILAGGKCDDSVGYFVEPCIVESKDPQEPIMKEEIFGPVLSVYVYPDDKYKETLQLVDSTTSYGLTGAVFSQDKDVVQEATKVLRNAAGNFYINDKSTGSIVGQQPFGGARASGTNDKPGGPHYILRWTSPQVIKETHKPLGDWSYAYMQ</sequence>